<organism>
    <name type="scientific">Orgyia pseudotsugata multicapsid polyhedrosis virus</name>
    <name type="common">OpMNPV</name>
    <dbReference type="NCBI Taxonomy" id="262177"/>
    <lineage>
        <taxon>Viruses</taxon>
        <taxon>Viruses incertae sedis</taxon>
        <taxon>Naldaviricetes</taxon>
        <taxon>Lefavirales</taxon>
        <taxon>Baculoviridae</taxon>
        <taxon>Alphabaculovirus</taxon>
        <taxon>Alphabaculovirus orpseudotsugatae</taxon>
    </lineage>
</organism>
<keyword id="KW-1185">Reference proteome</keyword>
<keyword id="KW-0804">Transcription</keyword>
<keyword id="KW-0805">Transcription regulation</keyword>
<protein>
    <recommendedName>
        <fullName>Late expression factor 9</fullName>
    </recommendedName>
</protein>
<accession>O10319</accession>
<dbReference type="EMBL" id="U75930">
    <property type="protein sequence ID" value="AAC59064.1"/>
    <property type="molecule type" value="Genomic_DNA"/>
</dbReference>
<dbReference type="RefSeq" id="NP_046221.1">
    <property type="nucleotide sequence ID" value="NC_001875.2"/>
</dbReference>
<dbReference type="KEGG" id="vg:912000"/>
<dbReference type="OrthoDB" id="4939at10239"/>
<dbReference type="Proteomes" id="UP000009248">
    <property type="component" value="Genome"/>
</dbReference>
<dbReference type="GO" id="GO:0019083">
    <property type="term" value="P:viral transcription"/>
    <property type="evidence" value="ECO:0007669"/>
    <property type="project" value="InterPro"/>
</dbReference>
<dbReference type="InterPro" id="IPR007786">
    <property type="entry name" value="LEF-9"/>
</dbReference>
<dbReference type="Pfam" id="PF05094">
    <property type="entry name" value="LEF-9"/>
    <property type="match status" value="1"/>
</dbReference>
<reference key="1">
    <citation type="journal article" date="1997" name="Virology">
        <title>The sequence of the Orgyia pseudotsugata multinucleocapsid nuclear polyhedrosis virus genome.</title>
        <authorList>
            <person name="Ahrens C.H."/>
            <person name="Russell R.R."/>
            <person name="Funk C.J."/>
            <person name="Evans J."/>
            <person name="Harwood S."/>
            <person name="Rohrmann G.F."/>
        </authorList>
    </citation>
    <scope>NUCLEOTIDE SEQUENCE [LARGE SCALE GENOMIC DNA]</scope>
</reference>
<gene>
    <name type="primary">LEF-9</name>
    <name type="ORF">ORF65</name>
</gene>
<organismHost>
    <name type="scientific">Orgyia pseudotsugata</name>
    <name type="common">Douglas-fir tussock moth</name>
    <dbReference type="NCBI Taxonomy" id="33414"/>
</organismHost>
<feature type="chain" id="PRO_0000132832" description="Late expression factor 9">
    <location>
        <begin position="1"/>
        <end position="489"/>
    </location>
</feature>
<evidence type="ECO:0000250" key="1"/>
<evidence type="ECO:0000305" key="2"/>
<proteinExistence type="inferred from homology"/>
<comment type="function">
    <text evidence="1">Involved in late/very late gene activation.</text>
</comment>
<comment type="similarity">
    <text evidence="2">Belongs to the baculoviridae LEF-9 family.</text>
</comment>
<name>LEF9_NPVOP</name>
<sequence length="489" mass="55591">MVSFLDRPPTEFDLILDPAKLNSAAFFSNDEFRAVLKSLIGDLKKNQRPNYFNSLVDQMINVYAHISAGEHADALVRIIDATCVVVTNLPSNVFLKKLKTNKFTDSIDYLILPHFILWDYNFVVFLNNTFNSKHENSLVDISGALQKIKLTHGVIKDQLQSKNGYAVQYSYSTFLNTASFYANVQCLNGVNEVMPPLHSVRRYFGRDVPHARAWTTRHPNISQLSTQVSDVRVNDRDTDWNVKVGLGIFPGANTDCDGDKKIITYLPRPNSLIDLECLLYGDPRYSFICFDKNRLTFVSQQIFYLHKNVEAVERLLKTMPLAFALWRIHANVKFSARLELLLRDFCLVASSNASYLLFKQLTELIKDEEMVCADEELFGLSGQFTDMVNSGAKGSAALIESTRQYARTRATDIDIVSTRATTSLNSYISSHNKVQVCGADIYHNTAVLQNLYIKNNYICYKNDDRRIASICALPSEYLFPEHLLDLFIE</sequence>